<sequence length="261" mass="28825">MRLALGIEYDGAGFCGWQSQPNRLAVQDALESALSQLAGHQVRVSAAGRTDTGVHALSQVVHFDTEAVRSQTAWVRGVNTKLPRGVRVLWAKEVDPRFHARFDAYQRSYQYWLINQPVAPAVMAGKAGWFHQPLDLQAMQEAMAYLLGQHDFSAFRAAECQAKSPVKTMHHASVSAFGSSMIFDFCASAFLHHQVRNMVGALVYIGKGKYPPVFIAELLEKRDRRCSPPTFSPDGLYLTGVGYDGCWGLPGTERKLQIGIA</sequence>
<comment type="function">
    <text evidence="1">Formation of pseudouridine at positions 38, 39 and 40 in the anticodon stem and loop of transfer RNAs.</text>
</comment>
<comment type="catalytic activity">
    <reaction evidence="1">
        <text>uridine(38/39/40) in tRNA = pseudouridine(38/39/40) in tRNA</text>
        <dbReference type="Rhea" id="RHEA:22376"/>
        <dbReference type="Rhea" id="RHEA-COMP:10085"/>
        <dbReference type="Rhea" id="RHEA-COMP:10087"/>
        <dbReference type="ChEBI" id="CHEBI:65314"/>
        <dbReference type="ChEBI" id="CHEBI:65315"/>
        <dbReference type="EC" id="5.4.99.12"/>
    </reaction>
</comment>
<comment type="subunit">
    <text evidence="1">Homodimer.</text>
</comment>
<comment type="similarity">
    <text evidence="1">Belongs to the tRNA pseudouridine synthase TruA family.</text>
</comment>
<accession>Q1H0L9</accession>
<feature type="chain" id="PRO_1000017113" description="tRNA pseudouridine synthase A">
    <location>
        <begin position="1"/>
        <end position="261"/>
    </location>
</feature>
<feature type="active site" description="Nucleophile" evidence="1">
    <location>
        <position position="51"/>
    </location>
</feature>
<feature type="binding site" evidence="1">
    <location>
        <position position="109"/>
    </location>
    <ligand>
        <name>substrate</name>
    </ligand>
</feature>
<gene>
    <name evidence="1" type="primary">truA</name>
    <name type="ordered locus">Mfla_1700</name>
</gene>
<protein>
    <recommendedName>
        <fullName evidence="1">tRNA pseudouridine synthase A</fullName>
        <ecNumber evidence="1">5.4.99.12</ecNumber>
    </recommendedName>
    <alternativeName>
        <fullName evidence="1">tRNA pseudouridine(38-40) synthase</fullName>
    </alternativeName>
    <alternativeName>
        <fullName evidence="1">tRNA pseudouridylate synthase I</fullName>
    </alternativeName>
    <alternativeName>
        <fullName evidence="1">tRNA-uridine isomerase I</fullName>
    </alternativeName>
</protein>
<proteinExistence type="inferred from homology"/>
<dbReference type="EC" id="5.4.99.12" evidence="1"/>
<dbReference type="EMBL" id="CP000284">
    <property type="protein sequence ID" value="ABE49968.1"/>
    <property type="molecule type" value="Genomic_DNA"/>
</dbReference>
<dbReference type="RefSeq" id="WP_011479922.1">
    <property type="nucleotide sequence ID" value="NC_007947.1"/>
</dbReference>
<dbReference type="SMR" id="Q1H0L9"/>
<dbReference type="STRING" id="265072.Mfla_1700"/>
<dbReference type="KEGG" id="mfa:Mfla_1700"/>
<dbReference type="eggNOG" id="COG0101">
    <property type="taxonomic scope" value="Bacteria"/>
</dbReference>
<dbReference type="HOGENOM" id="CLU_014673_0_2_4"/>
<dbReference type="OrthoDB" id="9811823at2"/>
<dbReference type="Proteomes" id="UP000002440">
    <property type="component" value="Chromosome"/>
</dbReference>
<dbReference type="GO" id="GO:0003723">
    <property type="term" value="F:RNA binding"/>
    <property type="evidence" value="ECO:0007669"/>
    <property type="project" value="InterPro"/>
</dbReference>
<dbReference type="GO" id="GO:0160147">
    <property type="term" value="F:tRNA pseudouridine(38-40) synthase activity"/>
    <property type="evidence" value="ECO:0007669"/>
    <property type="project" value="UniProtKB-EC"/>
</dbReference>
<dbReference type="GO" id="GO:0031119">
    <property type="term" value="P:tRNA pseudouridine synthesis"/>
    <property type="evidence" value="ECO:0007669"/>
    <property type="project" value="UniProtKB-UniRule"/>
</dbReference>
<dbReference type="CDD" id="cd02570">
    <property type="entry name" value="PseudoU_synth_EcTruA"/>
    <property type="match status" value="1"/>
</dbReference>
<dbReference type="FunFam" id="3.30.70.580:FF:000001">
    <property type="entry name" value="tRNA pseudouridine synthase A"/>
    <property type="match status" value="1"/>
</dbReference>
<dbReference type="Gene3D" id="3.30.70.660">
    <property type="entry name" value="Pseudouridine synthase I, catalytic domain, C-terminal subdomain"/>
    <property type="match status" value="1"/>
</dbReference>
<dbReference type="Gene3D" id="3.30.70.580">
    <property type="entry name" value="Pseudouridine synthase I, catalytic domain, N-terminal subdomain"/>
    <property type="match status" value="1"/>
</dbReference>
<dbReference type="HAMAP" id="MF_00171">
    <property type="entry name" value="TruA"/>
    <property type="match status" value="1"/>
</dbReference>
<dbReference type="InterPro" id="IPR020103">
    <property type="entry name" value="PsdUridine_synth_cat_dom_sf"/>
</dbReference>
<dbReference type="InterPro" id="IPR001406">
    <property type="entry name" value="PsdUridine_synth_TruA"/>
</dbReference>
<dbReference type="InterPro" id="IPR020097">
    <property type="entry name" value="PsdUridine_synth_TruA_a/b_dom"/>
</dbReference>
<dbReference type="InterPro" id="IPR020095">
    <property type="entry name" value="PsdUridine_synth_TruA_C"/>
</dbReference>
<dbReference type="InterPro" id="IPR020094">
    <property type="entry name" value="TruA/RsuA/RluB/E/F_N"/>
</dbReference>
<dbReference type="NCBIfam" id="TIGR00071">
    <property type="entry name" value="hisT_truA"/>
    <property type="match status" value="1"/>
</dbReference>
<dbReference type="PANTHER" id="PTHR11142">
    <property type="entry name" value="PSEUDOURIDYLATE SYNTHASE"/>
    <property type="match status" value="1"/>
</dbReference>
<dbReference type="PANTHER" id="PTHR11142:SF0">
    <property type="entry name" value="TRNA PSEUDOURIDINE SYNTHASE-LIKE 1"/>
    <property type="match status" value="1"/>
</dbReference>
<dbReference type="Pfam" id="PF01416">
    <property type="entry name" value="PseudoU_synth_1"/>
    <property type="match status" value="2"/>
</dbReference>
<dbReference type="PIRSF" id="PIRSF001430">
    <property type="entry name" value="tRNA_psdUrid_synth"/>
    <property type="match status" value="1"/>
</dbReference>
<dbReference type="SUPFAM" id="SSF55120">
    <property type="entry name" value="Pseudouridine synthase"/>
    <property type="match status" value="1"/>
</dbReference>
<name>TRUA_METFK</name>
<reference key="1">
    <citation type="submission" date="2006-03" db="EMBL/GenBank/DDBJ databases">
        <title>Complete sequence of Methylobacillus flagellatus KT.</title>
        <authorList>
            <consortium name="US DOE Joint Genome Institute"/>
            <person name="Copeland A."/>
            <person name="Lucas S."/>
            <person name="Lapidus A."/>
            <person name="Barry K."/>
            <person name="Detter J.C."/>
            <person name="Glavina del Rio T."/>
            <person name="Hammon N."/>
            <person name="Israni S."/>
            <person name="Dalin E."/>
            <person name="Tice H."/>
            <person name="Pitluck S."/>
            <person name="Brettin T."/>
            <person name="Bruce D."/>
            <person name="Han C."/>
            <person name="Tapia R."/>
            <person name="Saunders E."/>
            <person name="Gilna P."/>
            <person name="Schmutz J."/>
            <person name="Larimer F."/>
            <person name="Land M."/>
            <person name="Kyrpides N."/>
            <person name="Anderson I."/>
            <person name="Richardson P."/>
        </authorList>
    </citation>
    <scope>NUCLEOTIDE SEQUENCE [LARGE SCALE GENOMIC DNA]</scope>
    <source>
        <strain>ATCC 51484 / DSM 6875 / VKM B-1610 / KT</strain>
    </source>
</reference>
<keyword id="KW-0413">Isomerase</keyword>
<keyword id="KW-1185">Reference proteome</keyword>
<keyword id="KW-0819">tRNA processing</keyword>
<evidence type="ECO:0000255" key="1">
    <source>
        <dbReference type="HAMAP-Rule" id="MF_00171"/>
    </source>
</evidence>
<organism>
    <name type="scientific">Methylobacillus flagellatus (strain ATCC 51484 / DSM 6875 / VKM B-1610 / KT)</name>
    <dbReference type="NCBI Taxonomy" id="265072"/>
    <lineage>
        <taxon>Bacteria</taxon>
        <taxon>Pseudomonadati</taxon>
        <taxon>Pseudomonadota</taxon>
        <taxon>Betaproteobacteria</taxon>
        <taxon>Nitrosomonadales</taxon>
        <taxon>Methylophilaceae</taxon>
        <taxon>Methylobacillus</taxon>
    </lineage>
</organism>